<comment type="function">
    <text evidence="1">Catalyzes the attachment of serine to tRNA(Ser). Is also able to aminoacylate tRNA(Sec) with serine, to form the misacylated tRNA L-seryl-tRNA(Sec), which will be further converted into selenocysteinyl-tRNA(Sec).</text>
</comment>
<comment type="catalytic activity">
    <reaction evidence="1">
        <text>tRNA(Ser) + L-serine + ATP = L-seryl-tRNA(Ser) + AMP + diphosphate + H(+)</text>
        <dbReference type="Rhea" id="RHEA:12292"/>
        <dbReference type="Rhea" id="RHEA-COMP:9669"/>
        <dbReference type="Rhea" id="RHEA-COMP:9703"/>
        <dbReference type="ChEBI" id="CHEBI:15378"/>
        <dbReference type="ChEBI" id="CHEBI:30616"/>
        <dbReference type="ChEBI" id="CHEBI:33019"/>
        <dbReference type="ChEBI" id="CHEBI:33384"/>
        <dbReference type="ChEBI" id="CHEBI:78442"/>
        <dbReference type="ChEBI" id="CHEBI:78533"/>
        <dbReference type="ChEBI" id="CHEBI:456215"/>
        <dbReference type="EC" id="6.1.1.11"/>
    </reaction>
</comment>
<comment type="catalytic activity">
    <reaction evidence="1">
        <text>tRNA(Sec) + L-serine + ATP = L-seryl-tRNA(Sec) + AMP + diphosphate + H(+)</text>
        <dbReference type="Rhea" id="RHEA:42580"/>
        <dbReference type="Rhea" id="RHEA-COMP:9742"/>
        <dbReference type="Rhea" id="RHEA-COMP:10128"/>
        <dbReference type="ChEBI" id="CHEBI:15378"/>
        <dbReference type="ChEBI" id="CHEBI:30616"/>
        <dbReference type="ChEBI" id="CHEBI:33019"/>
        <dbReference type="ChEBI" id="CHEBI:33384"/>
        <dbReference type="ChEBI" id="CHEBI:78442"/>
        <dbReference type="ChEBI" id="CHEBI:78533"/>
        <dbReference type="ChEBI" id="CHEBI:456215"/>
        <dbReference type="EC" id="6.1.1.11"/>
    </reaction>
</comment>
<comment type="pathway">
    <text evidence="1">Aminoacyl-tRNA biosynthesis; selenocysteinyl-tRNA(Sec) biosynthesis; L-seryl-tRNA(Sec) from L-serine and tRNA(Sec): step 1/1.</text>
</comment>
<comment type="subunit">
    <text evidence="1">Homodimer. The tRNA molecule binds across the dimer.</text>
</comment>
<comment type="subcellular location">
    <subcellularLocation>
        <location evidence="1">Cytoplasm</location>
    </subcellularLocation>
</comment>
<comment type="domain">
    <text evidence="1">Consists of two distinct domains, a catalytic core and a N-terminal extension that is involved in tRNA binding.</text>
</comment>
<comment type="similarity">
    <text evidence="1">Belongs to the class-II aminoacyl-tRNA synthetase family. Type-1 seryl-tRNA synthetase subfamily.</text>
</comment>
<proteinExistence type="inferred from homology"/>
<name>SYS_PYRNV</name>
<gene>
    <name evidence="1" type="primary">serS</name>
    <name type="ordered locus">Tneu_1611</name>
</gene>
<dbReference type="EC" id="6.1.1.11" evidence="1"/>
<dbReference type="EMBL" id="CP001014">
    <property type="protein sequence ID" value="ACB40534.1"/>
    <property type="molecule type" value="Genomic_DNA"/>
</dbReference>
<dbReference type="RefSeq" id="WP_012350953.1">
    <property type="nucleotide sequence ID" value="NC_010525.1"/>
</dbReference>
<dbReference type="SMR" id="B1Y9Y4"/>
<dbReference type="STRING" id="444157.Tneu_1611"/>
<dbReference type="GeneID" id="6165856"/>
<dbReference type="KEGG" id="tne:Tneu_1611"/>
<dbReference type="eggNOG" id="arCOG00403">
    <property type="taxonomic scope" value="Archaea"/>
</dbReference>
<dbReference type="HOGENOM" id="CLU_023797_0_1_2"/>
<dbReference type="OrthoDB" id="35932at2157"/>
<dbReference type="UniPathway" id="UPA00906">
    <property type="reaction ID" value="UER00895"/>
</dbReference>
<dbReference type="Proteomes" id="UP000001694">
    <property type="component" value="Chromosome"/>
</dbReference>
<dbReference type="GO" id="GO:0005737">
    <property type="term" value="C:cytoplasm"/>
    <property type="evidence" value="ECO:0007669"/>
    <property type="project" value="UniProtKB-SubCell"/>
</dbReference>
<dbReference type="GO" id="GO:0005524">
    <property type="term" value="F:ATP binding"/>
    <property type="evidence" value="ECO:0007669"/>
    <property type="project" value="UniProtKB-UniRule"/>
</dbReference>
<dbReference type="GO" id="GO:0004828">
    <property type="term" value="F:serine-tRNA ligase activity"/>
    <property type="evidence" value="ECO:0007669"/>
    <property type="project" value="UniProtKB-UniRule"/>
</dbReference>
<dbReference type="GO" id="GO:0016260">
    <property type="term" value="P:selenocysteine biosynthetic process"/>
    <property type="evidence" value="ECO:0007669"/>
    <property type="project" value="UniProtKB-UniRule"/>
</dbReference>
<dbReference type="GO" id="GO:0006434">
    <property type="term" value="P:seryl-tRNA aminoacylation"/>
    <property type="evidence" value="ECO:0007669"/>
    <property type="project" value="UniProtKB-UniRule"/>
</dbReference>
<dbReference type="CDD" id="cd00770">
    <property type="entry name" value="SerRS_core"/>
    <property type="match status" value="1"/>
</dbReference>
<dbReference type="Gene3D" id="3.30.930.10">
    <property type="entry name" value="Bira Bifunctional Protein, Domain 2"/>
    <property type="match status" value="1"/>
</dbReference>
<dbReference type="Gene3D" id="1.10.287.40">
    <property type="entry name" value="Serine-tRNA synthetase, tRNA binding domain"/>
    <property type="match status" value="1"/>
</dbReference>
<dbReference type="HAMAP" id="MF_00176">
    <property type="entry name" value="Ser_tRNA_synth_type1"/>
    <property type="match status" value="1"/>
</dbReference>
<dbReference type="InterPro" id="IPR002314">
    <property type="entry name" value="aa-tRNA-synt_IIb"/>
</dbReference>
<dbReference type="InterPro" id="IPR006195">
    <property type="entry name" value="aa-tRNA-synth_II"/>
</dbReference>
<dbReference type="InterPro" id="IPR045864">
    <property type="entry name" value="aa-tRNA-synth_II/BPL/LPL"/>
</dbReference>
<dbReference type="InterPro" id="IPR002317">
    <property type="entry name" value="Ser-tRNA-ligase_type_1"/>
</dbReference>
<dbReference type="InterPro" id="IPR015866">
    <property type="entry name" value="Ser-tRNA-synth_1_N"/>
</dbReference>
<dbReference type="InterPro" id="IPR042103">
    <property type="entry name" value="SerRS_1_N_sf"/>
</dbReference>
<dbReference type="InterPro" id="IPR033729">
    <property type="entry name" value="SerRS_core"/>
</dbReference>
<dbReference type="InterPro" id="IPR010978">
    <property type="entry name" value="tRNA-bd_arm"/>
</dbReference>
<dbReference type="NCBIfam" id="TIGR00414">
    <property type="entry name" value="serS"/>
    <property type="match status" value="1"/>
</dbReference>
<dbReference type="PANTHER" id="PTHR11778">
    <property type="entry name" value="SERYL-TRNA SYNTHETASE"/>
    <property type="match status" value="1"/>
</dbReference>
<dbReference type="Pfam" id="PF02403">
    <property type="entry name" value="Seryl_tRNA_N"/>
    <property type="match status" value="1"/>
</dbReference>
<dbReference type="Pfam" id="PF00587">
    <property type="entry name" value="tRNA-synt_2b"/>
    <property type="match status" value="1"/>
</dbReference>
<dbReference type="PIRSF" id="PIRSF001529">
    <property type="entry name" value="Ser-tRNA-synth_IIa"/>
    <property type="match status" value="1"/>
</dbReference>
<dbReference type="PRINTS" id="PR00981">
    <property type="entry name" value="TRNASYNTHSER"/>
</dbReference>
<dbReference type="SUPFAM" id="SSF55681">
    <property type="entry name" value="Class II aaRS and biotin synthetases"/>
    <property type="match status" value="1"/>
</dbReference>
<dbReference type="SUPFAM" id="SSF46589">
    <property type="entry name" value="tRNA-binding arm"/>
    <property type="match status" value="1"/>
</dbReference>
<dbReference type="PROSITE" id="PS50862">
    <property type="entry name" value="AA_TRNA_LIGASE_II"/>
    <property type="match status" value="1"/>
</dbReference>
<sequence>MSYSVLEALRNNPDHVRKVLAARRLDVSLVDRFIELDGRWRQLKREVDELRRSYNQLSREGARAPPDRRREIVEKARELAARLEKVEKEMEAVEREREELLWSFPNLIHDSVPVCPEGVDSVPVRHWGTIRVVKGAAAPEGVEYVVVEKPPVGHADMAEVVLGMADTLKAGEVAGSRFYYLFDDLVWLDFALAMYALDRLAQQGFRPVVPPYMLKFDVIRRVLDFDTFKDAIYKIEGEDLYLIATAEHGIAAYLHKRELVEEELPLLFVGWSPCFRKEAGAGNRDLKGIFRVHIFHKVEQFVFSLPEDSWKWHEEITKNTESLIRDLGLPYRVVNICAHDLGAPAAKKYDIEAWYPAQGMYRELASCSNVTDWQSYRLGIRVTRKGMRREFVHTLNCTGLATTRTITAILENFQREDGAVEIPKALRPYLEPIRAAPKEYIYPRRRG</sequence>
<feature type="chain" id="PRO_1000098135" description="Serine--tRNA ligase">
    <location>
        <begin position="1"/>
        <end position="447"/>
    </location>
</feature>
<feature type="binding site" evidence="1">
    <location>
        <begin position="245"/>
        <end position="247"/>
    </location>
    <ligand>
        <name>L-serine</name>
        <dbReference type="ChEBI" id="CHEBI:33384"/>
    </ligand>
</feature>
<feature type="binding site" evidence="1">
    <location>
        <begin position="276"/>
        <end position="278"/>
    </location>
    <ligand>
        <name>ATP</name>
        <dbReference type="ChEBI" id="CHEBI:30616"/>
    </ligand>
</feature>
<feature type="binding site" evidence="1">
    <location>
        <position position="292"/>
    </location>
    <ligand>
        <name>ATP</name>
        <dbReference type="ChEBI" id="CHEBI:30616"/>
    </ligand>
</feature>
<feature type="binding site" evidence="1">
    <location>
        <position position="299"/>
    </location>
    <ligand>
        <name>L-serine</name>
        <dbReference type="ChEBI" id="CHEBI:33384"/>
    </ligand>
</feature>
<feature type="binding site" evidence="1">
    <location>
        <begin position="363"/>
        <end position="366"/>
    </location>
    <ligand>
        <name>ATP</name>
        <dbReference type="ChEBI" id="CHEBI:30616"/>
    </ligand>
</feature>
<feature type="binding site" evidence="1">
    <location>
        <position position="398"/>
    </location>
    <ligand>
        <name>L-serine</name>
        <dbReference type="ChEBI" id="CHEBI:33384"/>
    </ligand>
</feature>
<protein>
    <recommendedName>
        <fullName evidence="1">Serine--tRNA ligase</fullName>
        <ecNumber evidence="1">6.1.1.11</ecNumber>
    </recommendedName>
    <alternativeName>
        <fullName evidence="1">Seryl-tRNA synthetase</fullName>
        <shortName evidence="1">SerRS</shortName>
    </alternativeName>
    <alternativeName>
        <fullName evidence="1">Seryl-tRNA(Ser/Sec) synthetase</fullName>
    </alternativeName>
</protein>
<accession>B1Y9Y4</accession>
<organism>
    <name type="scientific">Pyrobaculum neutrophilum (strain DSM 2338 / JCM 9278 / NBRC 100436 / V24Sta)</name>
    <name type="common">Thermoproteus neutrophilus</name>
    <dbReference type="NCBI Taxonomy" id="444157"/>
    <lineage>
        <taxon>Archaea</taxon>
        <taxon>Thermoproteota</taxon>
        <taxon>Thermoprotei</taxon>
        <taxon>Thermoproteales</taxon>
        <taxon>Thermoproteaceae</taxon>
        <taxon>Pyrobaculum</taxon>
    </lineage>
</organism>
<keyword id="KW-0030">Aminoacyl-tRNA synthetase</keyword>
<keyword id="KW-0067">ATP-binding</keyword>
<keyword id="KW-0963">Cytoplasm</keyword>
<keyword id="KW-0436">Ligase</keyword>
<keyword id="KW-0547">Nucleotide-binding</keyword>
<keyword id="KW-0648">Protein biosynthesis</keyword>
<reference key="1">
    <citation type="submission" date="2008-03" db="EMBL/GenBank/DDBJ databases">
        <title>Complete sequence of Thermoproteus neutrophilus V24Sta.</title>
        <authorList>
            <consortium name="US DOE Joint Genome Institute"/>
            <person name="Copeland A."/>
            <person name="Lucas S."/>
            <person name="Lapidus A."/>
            <person name="Glavina del Rio T."/>
            <person name="Dalin E."/>
            <person name="Tice H."/>
            <person name="Bruce D."/>
            <person name="Goodwin L."/>
            <person name="Pitluck S."/>
            <person name="Sims D."/>
            <person name="Brettin T."/>
            <person name="Detter J.C."/>
            <person name="Han C."/>
            <person name="Kuske C.R."/>
            <person name="Schmutz J."/>
            <person name="Larimer F."/>
            <person name="Land M."/>
            <person name="Hauser L."/>
            <person name="Kyrpides N."/>
            <person name="Mikhailova N."/>
            <person name="Biddle J.F."/>
            <person name="Zhang Z."/>
            <person name="Fitz-Gibbon S.T."/>
            <person name="Lowe T.M."/>
            <person name="Saltikov C."/>
            <person name="House C.H."/>
            <person name="Richardson P."/>
        </authorList>
    </citation>
    <scope>NUCLEOTIDE SEQUENCE [LARGE SCALE GENOMIC DNA]</scope>
    <source>
        <strain>DSM 2338 / JCM 9278 / NBRC 100436 / V24Sta</strain>
    </source>
</reference>
<evidence type="ECO:0000255" key="1">
    <source>
        <dbReference type="HAMAP-Rule" id="MF_00176"/>
    </source>
</evidence>